<evidence type="ECO:0000255" key="1">
    <source>
        <dbReference type="HAMAP-Rule" id="MF_00131"/>
    </source>
</evidence>
<gene>
    <name evidence="1" type="primary">trpA</name>
    <name type="ordered locus">LBJ_0914</name>
</gene>
<reference key="1">
    <citation type="journal article" date="2006" name="Proc. Natl. Acad. Sci. U.S.A.">
        <title>Genome reduction in Leptospira borgpetersenii reflects limited transmission potential.</title>
        <authorList>
            <person name="Bulach D.M."/>
            <person name="Zuerner R.L."/>
            <person name="Wilson P."/>
            <person name="Seemann T."/>
            <person name="McGrath A."/>
            <person name="Cullen P.A."/>
            <person name="Davis J."/>
            <person name="Johnson M."/>
            <person name="Kuczek E."/>
            <person name="Alt D.P."/>
            <person name="Peterson-Burch B."/>
            <person name="Coppel R.L."/>
            <person name="Rood J.I."/>
            <person name="Davies J.K."/>
            <person name="Adler B."/>
        </authorList>
    </citation>
    <scope>NUCLEOTIDE SEQUENCE [LARGE SCALE GENOMIC DNA]</scope>
    <source>
        <strain>JB197</strain>
    </source>
</reference>
<keyword id="KW-0028">Amino-acid biosynthesis</keyword>
<keyword id="KW-0057">Aromatic amino acid biosynthesis</keyword>
<keyword id="KW-0456">Lyase</keyword>
<keyword id="KW-0822">Tryptophan biosynthesis</keyword>
<protein>
    <recommendedName>
        <fullName evidence="1">Tryptophan synthase alpha chain</fullName>
        <ecNumber evidence="1">4.2.1.20</ecNumber>
    </recommendedName>
</protein>
<sequence length="264" mass="28924">MSAISSVFSSDKSVFIPYISLGDPDYESCISWADALIRGGAGILELGIPFSDPVADGPVIQKAFKRALAYPFSMKKILEITAEIHKLHPETPLVYLTYFNPLYSMGLEAFTESAKNSGIQGLIIPDLPFDTSEAEEFFSQLERKKIDFIHLVTPATTIDRIQSMKSFASGFIYYVTSYGVTGERRALAVGLKERIQMVRNKVGLPVCAGFGISTADQAKEISTYANGVIIGSAVQKIIEESGSNREVCISKLFTYASEIRASMK</sequence>
<organism>
    <name type="scientific">Leptospira borgpetersenii serovar Hardjo-bovis (strain JB197)</name>
    <dbReference type="NCBI Taxonomy" id="355277"/>
    <lineage>
        <taxon>Bacteria</taxon>
        <taxon>Pseudomonadati</taxon>
        <taxon>Spirochaetota</taxon>
        <taxon>Spirochaetia</taxon>
        <taxon>Leptospirales</taxon>
        <taxon>Leptospiraceae</taxon>
        <taxon>Leptospira</taxon>
    </lineage>
</organism>
<accession>Q04U62</accession>
<proteinExistence type="inferred from homology"/>
<name>TRPA_LEPBJ</name>
<feature type="chain" id="PRO_1000018223" description="Tryptophan synthase alpha chain">
    <location>
        <begin position="1"/>
        <end position="264"/>
    </location>
</feature>
<feature type="active site" description="Proton acceptor" evidence="1">
    <location>
        <position position="45"/>
    </location>
</feature>
<feature type="active site" description="Proton acceptor" evidence="1">
    <location>
        <position position="56"/>
    </location>
</feature>
<dbReference type="EC" id="4.2.1.20" evidence="1"/>
<dbReference type="EMBL" id="CP000350">
    <property type="protein sequence ID" value="ABJ75558.1"/>
    <property type="molecule type" value="Genomic_DNA"/>
</dbReference>
<dbReference type="RefSeq" id="WP_002727293.1">
    <property type="nucleotide sequence ID" value="NC_008510.1"/>
</dbReference>
<dbReference type="SMR" id="Q04U62"/>
<dbReference type="GeneID" id="61173539"/>
<dbReference type="KEGG" id="lbj:LBJ_0914"/>
<dbReference type="HOGENOM" id="CLU_016734_0_0_12"/>
<dbReference type="UniPathway" id="UPA00035">
    <property type="reaction ID" value="UER00044"/>
</dbReference>
<dbReference type="Proteomes" id="UP000000656">
    <property type="component" value="Chromosome 1"/>
</dbReference>
<dbReference type="GO" id="GO:0005829">
    <property type="term" value="C:cytosol"/>
    <property type="evidence" value="ECO:0007669"/>
    <property type="project" value="TreeGrafter"/>
</dbReference>
<dbReference type="GO" id="GO:0004834">
    <property type="term" value="F:tryptophan synthase activity"/>
    <property type="evidence" value="ECO:0007669"/>
    <property type="project" value="UniProtKB-UniRule"/>
</dbReference>
<dbReference type="CDD" id="cd04724">
    <property type="entry name" value="Tryptophan_synthase_alpha"/>
    <property type="match status" value="1"/>
</dbReference>
<dbReference type="FunFam" id="3.20.20.70:FF:000037">
    <property type="entry name" value="Tryptophan synthase alpha chain"/>
    <property type="match status" value="1"/>
</dbReference>
<dbReference type="Gene3D" id="3.20.20.70">
    <property type="entry name" value="Aldolase class I"/>
    <property type="match status" value="1"/>
</dbReference>
<dbReference type="HAMAP" id="MF_00131">
    <property type="entry name" value="Trp_synth_alpha"/>
    <property type="match status" value="1"/>
</dbReference>
<dbReference type="InterPro" id="IPR013785">
    <property type="entry name" value="Aldolase_TIM"/>
</dbReference>
<dbReference type="InterPro" id="IPR011060">
    <property type="entry name" value="RibuloseP-bd_barrel"/>
</dbReference>
<dbReference type="InterPro" id="IPR018204">
    <property type="entry name" value="Trp_synthase_alpha_AS"/>
</dbReference>
<dbReference type="InterPro" id="IPR002028">
    <property type="entry name" value="Trp_synthase_suA"/>
</dbReference>
<dbReference type="NCBIfam" id="TIGR00262">
    <property type="entry name" value="trpA"/>
    <property type="match status" value="1"/>
</dbReference>
<dbReference type="PANTHER" id="PTHR43406:SF1">
    <property type="entry name" value="TRYPTOPHAN SYNTHASE ALPHA CHAIN, CHLOROPLASTIC"/>
    <property type="match status" value="1"/>
</dbReference>
<dbReference type="PANTHER" id="PTHR43406">
    <property type="entry name" value="TRYPTOPHAN SYNTHASE, ALPHA CHAIN"/>
    <property type="match status" value="1"/>
</dbReference>
<dbReference type="Pfam" id="PF00290">
    <property type="entry name" value="Trp_syntA"/>
    <property type="match status" value="1"/>
</dbReference>
<dbReference type="SUPFAM" id="SSF51366">
    <property type="entry name" value="Ribulose-phoshate binding barrel"/>
    <property type="match status" value="1"/>
</dbReference>
<dbReference type="PROSITE" id="PS00167">
    <property type="entry name" value="TRP_SYNTHASE_ALPHA"/>
    <property type="match status" value="1"/>
</dbReference>
<comment type="function">
    <text evidence="1">The alpha subunit is responsible for the aldol cleavage of indoleglycerol phosphate to indole and glyceraldehyde 3-phosphate.</text>
</comment>
<comment type="catalytic activity">
    <reaction evidence="1">
        <text>(1S,2R)-1-C-(indol-3-yl)glycerol 3-phosphate + L-serine = D-glyceraldehyde 3-phosphate + L-tryptophan + H2O</text>
        <dbReference type="Rhea" id="RHEA:10532"/>
        <dbReference type="ChEBI" id="CHEBI:15377"/>
        <dbReference type="ChEBI" id="CHEBI:33384"/>
        <dbReference type="ChEBI" id="CHEBI:57912"/>
        <dbReference type="ChEBI" id="CHEBI:58866"/>
        <dbReference type="ChEBI" id="CHEBI:59776"/>
        <dbReference type="EC" id="4.2.1.20"/>
    </reaction>
</comment>
<comment type="pathway">
    <text evidence="1">Amino-acid biosynthesis; L-tryptophan biosynthesis; L-tryptophan from chorismate: step 5/5.</text>
</comment>
<comment type="subunit">
    <text evidence="1">Tetramer of two alpha and two beta chains.</text>
</comment>
<comment type="similarity">
    <text evidence="1">Belongs to the TrpA family.</text>
</comment>